<protein>
    <recommendedName>
        <fullName evidence="1">Ribosomal protein L11 methyltransferase</fullName>
        <shortName evidence="1">L11 Mtase</shortName>
        <ecNumber evidence="1">2.1.1.-</ecNumber>
    </recommendedName>
</protein>
<accession>B2V2I9</accession>
<organism>
    <name type="scientific">Clostridium botulinum (strain Alaska E43 / Type E3)</name>
    <dbReference type="NCBI Taxonomy" id="508767"/>
    <lineage>
        <taxon>Bacteria</taxon>
        <taxon>Bacillati</taxon>
        <taxon>Bacillota</taxon>
        <taxon>Clostridia</taxon>
        <taxon>Eubacteriales</taxon>
        <taxon>Clostridiaceae</taxon>
        <taxon>Clostridium</taxon>
    </lineage>
</organism>
<sequence length="313" mass="34436">MNGVWIEVRVITSCEAIEPISGIFYGLNSQGVAVEDPNDLLTRDQGPLTWDFADINVLEHKGEFAVVKAYFSGDDDLEKIVSITKEKVKEIQEMGIDIGKGIVECDKIKEEDWANNWKKYYKPSNITDRIVVKPMWEEYLPKNEELVIELDPGMAFGTGTHETTRMCVKALEKYVEHDSTVFDVGCGSGILAIAAAKLGAKLALGVDLDPVAVESAKENVGLNDLDNIEILEGNLLDVIDGKADIVVANIIAEIICILTDDVSKALNKGGLFITSGIIHERVDMVTSKLDECGFEVMEVNKDGEWNCIVAKLK</sequence>
<name>PRMA_CLOBA</name>
<evidence type="ECO:0000255" key="1">
    <source>
        <dbReference type="HAMAP-Rule" id="MF_00735"/>
    </source>
</evidence>
<feature type="chain" id="PRO_1000192602" description="Ribosomal protein L11 methyltransferase">
    <location>
        <begin position="1"/>
        <end position="313"/>
    </location>
</feature>
<feature type="binding site" evidence="1">
    <location>
        <position position="164"/>
    </location>
    <ligand>
        <name>S-adenosyl-L-methionine</name>
        <dbReference type="ChEBI" id="CHEBI:59789"/>
    </ligand>
</feature>
<feature type="binding site" evidence="1">
    <location>
        <position position="185"/>
    </location>
    <ligand>
        <name>S-adenosyl-L-methionine</name>
        <dbReference type="ChEBI" id="CHEBI:59789"/>
    </ligand>
</feature>
<feature type="binding site" evidence="1">
    <location>
        <position position="207"/>
    </location>
    <ligand>
        <name>S-adenosyl-L-methionine</name>
        <dbReference type="ChEBI" id="CHEBI:59789"/>
    </ligand>
</feature>
<feature type="binding site" evidence="1">
    <location>
        <position position="249"/>
    </location>
    <ligand>
        <name>S-adenosyl-L-methionine</name>
        <dbReference type="ChEBI" id="CHEBI:59789"/>
    </ligand>
</feature>
<proteinExistence type="inferred from homology"/>
<comment type="function">
    <text evidence="1">Methylates ribosomal protein L11.</text>
</comment>
<comment type="catalytic activity">
    <reaction evidence="1">
        <text>L-lysyl-[protein] + 3 S-adenosyl-L-methionine = N(6),N(6),N(6)-trimethyl-L-lysyl-[protein] + 3 S-adenosyl-L-homocysteine + 3 H(+)</text>
        <dbReference type="Rhea" id="RHEA:54192"/>
        <dbReference type="Rhea" id="RHEA-COMP:9752"/>
        <dbReference type="Rhea" id="RHEA-COMP:13826"/>
        <dbReference type="ChEBI" id="CHEBI:15378"/>
        <dbReference type="ChEBI" id="CHEBI:29969"/>
        <dbReference type="ChEBI" id="CHEBI:57856"/>
        <dbReference type="ChEBI" id="CHEBI:59789"/>
        <dbReference type="ChEBI" id="CHEBI:61961"/>
    </reaction>
</comment>
<comment type="subcellular location">
    <subcellularLocation>
        <location evidence="1">Cytoplasm</location>
    </subcellularLocation>
</comment>
<comment type="similarity">
    <text evidence="1">Belongs to the methyltransferase superfamily. PrmA family.</text>
</comment>
<dbReference type="EC" id="2.1.1.-" evidence="1"/>
<dbReference type="EMBL" id="CP001078">
    <property type="protein sequence ID" value="ACD51331.1"/>
    <property type="molecule type" value="Genomic_DNA"/>
</dbReference>
<dbReference type="RefSeq" id="WP_012449718.1">
    <property type="nucleotide sequence ID" value="NC_010723.1"/>
</dbReference>
<dbReference type="SMR" id="B2V2I9"/>
<dbReference type="KEGG" id="cbt:CLH_0862"/>
<dbReference type="HOGENOM" id="CLU_049382_0_1_9"/>
<dbReference type="GO" id="GO:0005737">
    <property type="term" value="C:cytoplasm"/>
    <property type="evidence" value="ECO:0007669"/>
    <property type="project" value="UniProtKB-SubCell"/>
</dbReference>
<dbReference type="GO" id="GO:0016279">
    <property type="term" value="F:protein-lysine N-methyltransferase activity"/>
    <property type="evidence" value="ECO:0007669"/>
    <property type="project" value="RHEA"/>
</dbReference>
<dbReference type="GO" id="GO:0032259">
    <property type="term" value="P:methylation"/>
    <property type="evidence" value="ECO:0007669"/>
    <property type="project" value="UniProtKB-KW"/>
</dbReference>
<dbReference type="CDD" id="cd02440">
    <property type="entry name" value="AdoMet_MTases"/>
    <property type="match status" value="1"/>
</dbReference>
<dbReference type="Gene3D" id="3.40.50.150">
    <property type="entry name" value="Vaccinia Virus protein VP39"/>
    <property type="match status" value="1"/>
</dbReference>
<dbReference type="HAMAP" id="MF_00735">
    <property type="entry name" value="Methyltr_PrmA"/>
    <property type="match status" value="1"/>
</dbReference>
<dbReference type="InterPro" id="IPR050078">
    <property type="entry name" value="Ribosomal_L11_MeTrfase_PrmA"/>
</dbReference>
<dbReference type="InterPro" id="IPR004498">
    <property type="entry name" value="Ribosomal_PrmA_MeTrfase"/>
</dbReference>
<dbReference type="InterPro" id="IPR029063">
    <property type="entry name" value="SAM-dependent_MTases_sf"/>
</dbReference>
<dbReference type="NCBIfam" id="TIGR00406">
    <property type="entry name" value="prmA"/>
    <property type="match status" value="1"/>
</dbReference>
<dbReference type="PANTHER" id="PTHR43648">
    <property type="entry name" value="ELECTRON TRANSFER FLAVOPROTEIN BETA SUBUNIT LYSINE METHYLTRANSFERASE"/>
    <property type="match status" value="1"/>
</dbReference>
<dbReference type="PANTHER" id="PTHR43648:SF1">
    <property type="entry name" value="ELECTRON TRANSFER FLAVOPROTEIN BETA SUBUNIT LYSINE METHYLTRANSFERASE"/>
    <property type="match status" value="1"/>
</dbReference>
<dbReference type="Pfam" id="PF06325">
    <property type="entry name" value="PrmA"/>
    <property type="match status" value="1"/>
</dbReference>
<dbReference type="PIRSF" id="PIRSF000401">
    <property type="entry name" value="RPL11_MTase"/>
    <property type="match status" value="1"/>
</dbReference>
<dbReference type="SUPFAM" id="SSF53335">
    <property type="entry name" value="S-adenosyl-L-methionine-dependent methyltransferases"/>
    <property type="match status" value="1"/>
</dbReference>
<gene>
    <name evidence="1" type="primary">prmA</name>
    <name type="ordered locus">CLH_0862</name>
</gene>
<keyword id="KW-0963">Cytoplasm</keyword>
<keyword id="KW-0489">Methyltransferase</keyword>
<keyword id="KW-0949">S-adenosyl-L-methionine</keyword>
<keyword id="KW-0808">Transferase</keyword>
<reference key="1">
    <citation type="submission" date="2008-05" db="EMBL/GenBank/DDBJ databases">
        <title>Complete genome sequence of Clostridium botulinum E3 str. Alaska E43.</title>
        <authorList>
            <person name="Brinkac L.M."/>
            <person name="Brown J.L."/>
            <person name="Bruce D."/>
            <person name="Detter C."/>
            <person name="Munk C."/>
            <person name="Smith L.A."/>
            <person name="Smith T.J."/>
            <person name="Sutton G."/>
            <person name="Brettin T.S."/>
        </authorList>
    </citation>
    <scope>NUCLEOTIDE SEQUENCE [LARGE SCALE GENOMIC DNA]</scope>
    <source>
        <strain>Alaska E43 / Type E3</strain>
    </source>
</reference>